<sequence>MQNNIDKVLILDFGSQFTQLITRRIRELNVYSEIHPFHVSIDFIKEFKPKAIILSGGPSSVYEEDAPKVDKQLFELGMPILGICYGMQIIVYSMGGKVESADKREYGKAEIEITNHESIFKSFGKSNIVWMSHGDSIKSIPEGFELIAKTPNTELAAIENKQKNIYAIQFHPEVVHTENGIKIIENFLFNICKCERNWNMGSFIEYEIKRIRETVGDKNVILGLSGGVDSSVAAVLIEKAIGKQLKCIFVNNGLLRKDEDKKVVEVFRDNFNIDLIYVDASKRFLDKLAGVTDPEQKRKVIGHEFVSVFNDEAKKIENVGFLAQGTLYPDVIESVSLRGSSAVIKSHHNVGGLPKDMKFELLEPFRELFKDEVREIGLELKLPEDIVYRQPFPGPGLAVRILGDITEERVKILQEADDIVVSEIKKAGLYRKLWQSFAILLPVKSVGVMGDGRTYEQVCAVRAVESVDAMTADWAKIDYNVLGIISNRIINEVKGINRVVYDISSKPPATIEWE</sequence>
<evidence type="ECO:0000255" key="1">
    <source>
        <dbReference type="HAMAP-Rule" id="MF_00344"/>
    </source>
</evidence>
<name>GUAA_BRAHW</name>
<keyword id="KW-0067">ATP-binding</keyword>
<keyword id="KW-0315">Glutamine amidotransferase</keyword>
<keyword id="KW-0332">GMP biosynthesis</keyword>
<keyword id="KW-0436">Ligase</keyword>
<keyword id="KW-0547">Nucleotide-binding</keyword>
<keyword id="KW-0658">Purine biosynthesis</keyword>
<proteinExistence type="inferred from homology"/>
<comment type="function">
    <text evidence="1">Catalyzes the synthesis of GMP from XMP.</text>
</comment>
<comment type="catalytic activity">
    <reaction evidence="1">
        <text>XMP + L-glutamine + ATP + H2O = GMP + L-glutamate + AMP + diphosphate + 2 H(+)</text>
        <dbReference type="Rhea" id="RHEA:11680"/>
        <dbReference type="ChEBI" id="CHEBI:15377"/>
        <dbReference type="ChEBI" id="CHEBI:15378"/>
        <dbReference type="ChEBI" id="CHEBI:29985"/>
        <dbReference type="ChEBI" id="CHEBI:30616"/>
        <dbReference type="ChEBI" id="CHEBI:33019"/>
        <dbReference type="ChEBI" id="CHEBI:57464"/>
        <dbReference type="ChEBI" id="CHEBI:58115"/>
        <dbReference type="ChEBI" id="CHEBI:58359"/>
        <dbReference type="ChEBI" id="CHEBI:456215"/>
        <dbReference type="EC" id="6.3.5.2"/>
    </reaction>
</comment>
<comment type="pathway">
    <text evidence="1">Purine metabolism; GMP biosynthesis; GMP from XMP (L-Gln route): step 1/1.</text>
</comment>
<comment type="subunit">
    <text evidence="1">Homodimer.</text>
</comment>
<feature type="chain" id="PRO_1000190229" description="GMP synthase [glutamine-hydrolyzing]">
    <location>
        <begin position="1"/>
        <end position="514"/>
    </location>
</feature>
<feature type="domain" description="Glutamine amidotransferase type-1" evidence="1">
    <location>
        <begin position="7"/>
        <end position="197"/>
    </location>
</feature>
<feature type="domain" description="GMPS ATP-PPase" evidence="1">
    <location>
        <begin position="198"/>
        <end position="389"/>
    </location>
</feature>
<feature type="active site" description="Nucleophile" evidence="1">
    <location>
        <position position="84"/>
    </location>
</feature>
<feature type="active site" evidence="1">
    <location>
        <position position="171"/>
    </location>
</feature>
<feature type="active site" evidence="1">
    <location>
        <position position="173"/>
    </location>
</feature>
<feature type="binding site" evidence="1">
    <location>
        <begin position="225"/>
        <end position="231"/>
    </location>
    <ligand>
        <name>ATP</name>
        <dbReference type="ChEBI" id="CHEBI:30616"/>
    </ligand>
</feature>
<protein>
    <recommendedName>
        <fullName evidence="1">GMP synthase [glutamine-hydrolyzing]</fullName>
        <ecNumber evidence="1">6.3.5.2</ecNumber>
    </recommendedName>
    <alternativeName>
        <fullName evidence="1">GMP synthetase</fullName>
    </alternativeName>
    <alternativeName>
        <fullName evidence="1">Glutamine amidotransferase</fullName>
    </alternativeName>
</protein>
<accession>C0QYF1</accession>
<reference key="1">
    <citation type="journal article" date="2009" name="PLoS ONE">
        <title>Genome sequence of the pathogenic intestinal spirochete Brachyspira hyodysenteriae reveals adaptations to its lifestyle in the porcine large intestine.</title>
        <authorList>
            <person name="Bellgard M.I."/>
            <person name="Wanchanthuek P."/>
            <person name="La T."/>
            <person name="Ryan K."/>
            <person name="Moolhuijzen P."/>
            <person name="Albertyn Z."/>
            <person name="Shaban B."/>
            <person name="Motro Y."/>
            <person name="Dunn D.S."/>
            <person name="Schibeci D."/>
            <person name="Hunter A."/>
            <person name="Barrero R."/>
            <person name="Phillips N.D."/>
            <person name="Hampson D.J."/>
        </authorList>
    </citation>
    <scope>NUCLEOTIDE SEQUENCE [LARGE SCALE GENOMIC DNA]</scope>
    <source>
        <strain>ATCC 49526 / WA1</strain>
    </source>
</reference>
<gene>
    <name evidence="1" type="primary">guaA</name>
    <name type="ordered locus">BHWA1_02581</name>
</gene>
<dbReference type="EC" id="6.3.5.2" evidence="1"/>
<dbReference type="EMBL" id="CP001357">
    <property type="protein sequence ID" value="ACN85034.1"/>
    <property type="molecule type" value="Genomic_DNA"/>
</dbReference>
<dbReference type="RefSeq" id="WP_012672061.1">
    <property type="nucleotide sequence ID" value="NC_012225.1"/>
</dbReference>
<dbReference type="SMR" id="C0QYF1"/>
<dbReference type="STRING" id="565034.BHWA1_02581"/>
<dbReference type="MEROPS" id="C26.957"/>
<dbReference type="KEGG" id="bhy:BHWA1_02581"/>
<dbReference type="eggNOG" id="COG0518">
    <property type="taxonomic scope" value="Bacteria"/>
</dbReference>
<dbReference type="eggNOG" id="COG0519">
    <property type="taxonomic scope" value="Bacteria"/>
</dbReference>
<dbReference type="HOGENOM" id="CLU_014340_0_5_12"/>
<dbReference type="UniPathway" id="UPA00189">
    <property type="reaction ID" value="UER00296"/>
</dbReference>
<dbReference type="Proteomes" id="UP000001803">
    <property type="component" value="Chromosome"/>
</dbReference>
<dbReference type="GO" id="GO:0005829">
    <property type="term" value="C:cytosol"/>
    <property type="evidence" value="ECO:0007669"/>
    <property type="project" value="TreeGrafter"/>
</dbReference>
<dbReference type="GO" id="GO:0005524">
    <property type="term" value="F:ATP binding"/>
    <property type="evidence" value="ECO:0007669"/>
    <property type="project" value="UniProtKB-UniRule"/>
</dbReference>
<dbReference type="GO" id="GO:0003921">
    <property type="term" value="F:GMP synthase activity"/>
    <property type="evidence" value="ECO:0007669"/>
    <property type="project" value="InterPro"/>
</dbReference>
<dbReference type="CDD" id="cd01742">
    <property type="entry name" value="GATase1_GMP_Synthase"/>
    <property type="match status" value="1"/>
</dbReference>
<dbReference type="CDD" id="cd01997">
    <property type="entry name" value="GMP_synthase_C"/>
    <property type="match status" value="1"/>
</dbReference>
<dbReference type="FunFam" id="3.30.300.10:FF:000002">
    <property type="entry name" value="GMP synthase [glutamine-hydrolyzing]"/>
    <property type="match status" value="1"/>
</dbReference>
<dbReference type="FunFam" id="3.40.50.620:FF:000001">
    <property type="entry name" value="GMP synthase [glutamine-hydrolyzing]"/>
    <property type="match status" value="1"/>
</dbReference>
<dbReference type="FunFam" id="3.40.50.880:FF:000001">
    <property type="entry name" value="GMP synthase [glutamine-hydrolyzing]"/>
    <property type="match status" value="1"/>
</dbReference>
<dbReference type="Gene3D" id="3.30.300.10">
    <property type="match status" value="1"/>
</dbReference>
<dbReference type="Gene3D" id="3.40.50.880">
    <property type="match status" value="1"/>
</dbReference>
<dbReference type="Gene3D" id="3.40.50.620">
    <property type="entry name" value="HUPs"/>
    <property type="match status" value="1"/>
</dbReference>
<dbReference type="HAMAP" id="MF_00344">
    <property type="entry name" value="GMP_synthase"/>
    <property type="match status" value="1"/>
</dbReference>
<dbReference type="InterPro" id="IPR029062">
    <property type="entry name" value="Class_I_gatase-like"/>
</dbReference>
<dbReference type="InterPro" id="IPR017926">
    <property type="entry name" value="GATASE"/>
</dbReference>
<dbReference type="InterPro" id="IPR001674">
    <property type="entry name" value="GMP_synth_C"/>
</dbReference>
<dbReference type="InterPro" id="IPR004739">
    <property type="entry name" value="GMP_synth_GATase"/>
</dbReference>
<dbReference type="InterPro" id="IPR022955">
    <property type="entry name" value="GMP_synthase"/>
</dbReference>
<dbReference type="InterPro" id="IPR025777">
    <property type="entry name" value="GMPS_ATP_PPase_dom"/>
</dbReference>
<dbReference type="InterPro" id="IPR022310">
    <property type="entry name" value="NAD/GMP_synthase"/>
</dbReference>
<dbReference type="InterPro" id="IPR014729">
    <property type="entry name" value="Rossmann-like_a/b/a_fold"/>
</dbReference>
<dbReference type="NCBIfam" id="TIGR00884">
    <property type="entry name" value="guaA_Cterm"/>
    <property type="match status" value="1"/>
</dbReference>
<dbReference type="NCBIfam" id="TIGR00888">
    <property type="entry name" value="guaA_Nterm"/>
    <property type="match status" value="1"/>
</dbReference>
<dbReference type="NCBIfam" id="NF000848">
    <property type="entry name" value="PRK00074.1"/>
    <property type="match status" value="1"/>
</dbReference>
<dbReference type="PANTHER" id="PTHR11922:SF2">
    <property type="entry name" value="GMP SYNTHASE [GLUTAMINE-HYDROLYZING]"/>
    <property type="match status" value="1"/>
</dbReference>
<dbReference type="PANTHER" id="PTHR11922">
    <property type="entry name" value="GMP SYNTHASE-RELATED"/>
    <property type="match status" value="1"/>
</dbReference>
<dbReference type="Pfam" id="PF00117">
    <property type="entry name" value="GATase"/>
    <property type="match status" value="1"/>
</dbReference>
<dbReference type="Pfam" id="PF00958">
    <property type="entry name" value="GMP_synt_C"/>
    <property type="match status" value="1"/>
</dbReference>
<dbReference type="Pfam" id="PF02540">
    <property type="entry name" value="NAD_synthase"/>
    <property type="match status" value="1"/>
</dbReference>
<dbReference type="PRINTS" id="PR00097">
    <property type="entry name" value="ANTSNTHASEII"/>
</dbReference>
<dbReference type="PRINTS" id="PR00096">
    <property type="entry name" value="GATASE"/>
</dbReference>
<dbReference type="SUPFAM" id="SSF52402">
    <property type="entry name" value="Adenine nucleotide alpha hydrolases-like"/>
    <property type="match status" value="1"/>
</dbReference>
<dbReference type="SUPFAM" id="SSF52317">
    <property type="entry name" value="Class I glutamine amidotransferase-like"/>
    <property type="match status" value="1"/>
</dbReference>
<dbReference type="SUPFAM" id="SSF54810">
    <property type="entry name" value="GMP synthetase C-terminal dimerisation domain"/>
    <property type="match status" value="1"/>
</dbReference>
<dbReference type="PROSITE" id="PS51273">
    <property type="entry name" value="GATASE_TYPE_1"/>
    <property type="match status" value="1"/>
</dbReference>
<dbReference type="PROSITE" id="PS51553">
    <property type="entry name" value="GMPS_ATP_PPASE"/>
    <property type="match status" value="1"/>
</dbReference>
<organism>
    <name type="scientific">Brachyspira hyodysenteriae (strain ATCC 49526 / WA1)</name>
    <dbReference type="NCBI Taxonomy" id="565034"/>
    <lineage>
        <taxon>Bacteria</taxon>
        <taxon>Pseudomonadati</taxon>
        <taxon>Spirochaetota</taxon>
        <taxon>Spirochaetia</taxon>
        <taxon>Brachyspirales</taxon>
        <taxon>Brachyspiraceae</taxon>
        <taxon>Brachyspira</taxon>
    </lineage>
</organism>